<accession>Q7J1C2</accession>
<comment type="function">
    <text evidence="1">This b-type cytochrome is tightly associated with the reaction center of photosystem II (PSII). PSII is a light-driven water:plastoquinone oxidoreductase that uses light energy to abstract electrons from H(2)O, generating O(2) and a proton gradient subsequently used for ATP formation. It consists of a core antenna complex that captures photons, and an electron transfer chain that converts photonic excitation into a charge separation.</text>
</comment>
<comment type="cofactor">
    <cofactor evidence="1">
        <name>heme b</name>
        <dbReference type="ChEBI" id="CHEBI:60344"/>
    </cofactor>
    <text evidence="1">With its partner (PsbE) binds heme. PSII binds additional chlorophylls, carotenoids and specific lipids.</text>
</comment>
<comment type="subunit">
    <text evidence="1">Heterodimer of an alpha subunit and a beta subunit. PSII is composed of 1 copy each of membrane proteins PsbA, PsbB, PsbC, PsbD, PsbE, PsbF, PsbH, PsbI, PsbJ, PsbK, PsbL, PsbM, PsbT, PsbX, PsbY, PsbZ, Psb30/Ycf12, at least 3 peripheral proteins of the oxygen-evolving complex and a large number of cofactors. It forms dimeric complexes.</text>
</comment>
<comment type="subcellular location">
    <subcellularLocation>
        <location evidence="1">Plastid</location>
        <location evidence="1">Chloroplast thylakoid membrane</location>
        <topology evidence="1">Single-pass membrane protein</topology>
    </subcellularLocation>
</comment>
<comment type="similarity">
    <text evidence="1">Belongs to the PsbE/PsbF family.</text>
</comment>
<geneLocation type="chloroplast"/>
<sequence length="39" mass="4424">MTIDRTYPIFTVRWLAVHGLAVPTVSFLGSISAMQFIQR</sequence>
<keyword id="KW-0150">Chloroplast</keyword>
<keyword id="KW-0249">Electron transport</keyword>
<keyword id="KW-0349">Heme</keyword>
<keyword id="KW-0408">Iron</keyword>
<keyword id="KW-0472">Membrane</keyword>
<keyword id="KW-0479">Metal-binding</keyword>
<keyword id="KW-0602">Photosynthesis</keyword>
<keyword id="KW-0604">Photosystem II</keyword>
<keyword id="KW-0934">Plastid</keyword>
<keyword id="KW-0793">Thylakoid</keyword>
<keyword id="KW-0812">Transmembrane</keyword>
<keyword id="KW-1133">Transmembrane helix</keyword>
<keyword id="KW-0813">Transport</keyword>
<dbReference type="EMBL" id="AF123829">
    <property type="protein sequence ID" value="AAG26195.1"/>
    <property type="molecule type" value="Genomic_DNA"/>
</dbReference>
<dbReference type="SMR" id="Q7J1C2"/>
<dbReference type="GO" id="GO:0009535">
    <property type="term" value="C:chloroplast thylakoid membrane"/>
    <property type="evidence" value="ECO:0007669"/>
    <property type="project" value="UniProtKB-SubCell"/>
</dbReference>
<dbReference type="GO" id="GO:0009539">
    <property type="term" value="C:photosystem II reaction center"/>
    <property type="evidence" value="ECO:0007669"/>
    <property type="project" value="InterPro"/>
</dbReference>
<dbReference type="GO" id="GO:0009055">
    <property type="term" value="F:electron transfer activity"/>
    <property type="evidence" value="ECO:0007669"/>
    <property type="project" value="UniProtKB-UniRule"/>
</dbReference>
<dbReference type="GO" id="GO:0020037">
    <property type="term" value="F:heme binding"/>
    <property type="evidence" value="ECO:0007669"/>
    <property type="project" value="InterPro"/>
</dbReference>
<dbReference type="GO" id="GO:0005506">
    <property type="term" value="F:iron ion binding"/>
    <property type="evidence" value="ECO:0007669"/>
    <property type="project" value="UniProtKB-UniRule"/>
</dbReference>
<dbReference type="GO" id="GO:0009767">
    <property type="term" value="P:photosynthetic electron transport chain"/>
    <property type="evidence" value="ECO:0007669"/>
    <property type="project" value="InterPro"/>
</dbReference>
<dbReference type="HAMAP" id="MF_00643">
    <property type="entry name" value="PSII_PsbF"/>
    <property type="match status" value="1"/>
</dbReference>
<dbReference type="InterPro" id="IPR006241">
    <property type="entry name" value="PSII_cyt_b559_bsu"/>
</dbReference>
<dbReference type="InterPro" id="IPR006216">
    <property type="entry name" value="PSII_cyt_b559_CS"/>
</dbReference>
<dbReference type="InterPro" id="IPR013081">
    <property type="entry name" value="PSII_cyt_b559_N"/>
</dbReference>
<dbReference type="NCBIfam" id="TIGR01333">
    <property type="entry name" value="cyt_b559_beta"/>
    <property type="match status" value="1"/>
</dbReference>
<dbReference type="Pfam" id="PF00283">
    <property type="entry name" value="Cytochrom_B559"/>
    <property type="match status" value="1"/>
</dbReference>
<dbReference type="PIRSF" id="PIRSF000037">
    <property type="entry name" value="PsbF"/>
    <property type="match status" value="1"/>
</dbReference>
<dbReference type="SUPFAM" id="SSF161045">
    <property type="entry name" value="Cytochrome b559 subunits"/>
    <property type="match status" value="1"/>
</dbReference>
<dbReference type="PROSITE" id="PS00537">
    <property type="entry name" value="CYTOCHROME_B559"/>
    <property type="match status" value="1"/>
</dbReference>
<protein>
    <recommendedName>
        <fullName evidence="1">Cytochrome b559 subunit beta</fullName>
    </recommendedName>
    <alternativeName>
        <fullName evidence="1">PSII reaction center subunit VI</fullName>
    </alternativeName>
</protein>
<gene>
    <name evidence="1" type="primary">psbF</name>
</gene>
<proteinExistence type="inferred from homology"/>
<organism>
    <name type="scientific">Asarum canadense</name>
    <name type="common">Wild ginger</name>
    <dbReference type="NCBI Taxonomy" id="28498"/>
    <lineage>
        <taxon>Eukaryota</taxon>
        <taxon>Viridiplantae</taxon>
        <taxon>Streptophyta</taxon>
        <taxon>Embryophyta</taxon>
        <taxon>Tracheophyta</taxon>
        <taxon>Spermatophyta</taxon>
        <taxon>Magnoliopsida</taxon>
        <taxon>Magnoliidae</taxon>
        <taxon>Piperales</taxon>
        <taxon>Asaraceae</taxon>
        <taxon>Asarum</taxon>
    </lineage>
</organism>
<reference key="1">
    <citation type="journal article" date="2000" name="Am. J. Bot.">
        <title>Utility of 17 chloroplast genes for inferring the phylogeny of the basal angiosperms.</title>
        <authorList>
            <person name="Graham S.W."/>
            <person name="Olmstead R.G."/>
        </authorList>
    </citation>
    <scope>NUCLEOTIDE SEQUENCE [GENOMIC DNA]</scope>
</reference>
<feature type="chain" id="PRO_0000200357" description="Cytochrome b559 subunit beta">
    <location>
        <begin position="1"/>
        <end position="39"/>
    </location>
</feature>
<feature type="transmembrane region" description="Helical" evidence="1">
    <location>
        <begin position="14"/>
        <end position="30"/>
    </location>
</feature>
<feature type="binding site" description="axial binding residue" evidence="1">
    <location>
        <position position="18"/>
    </location>
    <ligand>
        <name>heme</name>
        <dbReference type="ChEBI" id="CHEBI:30413"/>
        <note>ligand shared with alpha subunit</note>
    </ligand>
    <ligandPart>
        <name>Fe</name>
        <dbReference type="ChEBI" id="CHEBI:18248"/>
    </ligandPart>
</feature>
<name>PSBF_ASACA</name>
<evidence type="ECO:0000255" key="1">
    <source>
        <dbReference type="HAMAP-Rule" id="MF_00643"/>
    </source>
</evidence>